<feature type="chain" id="PRO_0000308623" description="Hydroxyproline dehydrogenase">
    <location>
        <begin position="1"/>
        <end position="460"/>
    </location>
</feature>
<feature type="modified residue" description="N6-acetyllysine" evidence="1">
    <location>
        <position position="310"/>
    </location>
</feature>
<feature type="sequence variant" id="VAR_036852" description="In dbSNP:rs3848666.">
    <original>P</original>
    <variation>R</variation>
    <location>
        <position position="15"/>
    </location>
</feature>
<feature type="sequence variant" id="VAR_036853" description="In dbSNP:rs3761097.">
    <original>R</original>
    <variation>Q</variation>
    <location>
        <position position="449"/>
    </location>
</feature>
<gene>
    <name evidence="5" type="primary">PRODH2</name>
    <name evidence="5" type="synonym">HSPOX1</name>
    <name evidence="3" type="synonym">HYPDH</name>
</gene>
<protein>
    <recommendedName>
        <fullName evidence="3">Hydroxyproline dehydrogenase</fullName>
        <shortName evidence="3">HYPDH</shortName>
        <ecNumber evidence="2">1.5.5.3</ecNumber>
    </recommendedName>
    <alternativeName>
        <fullName>Kidney and liver proline oxidase 1</fullName>
        <shortName>HsPOX1</shortName>
    </alternativeName>
    <alternativeName>
        <fullName evidence="5">Probable proline dehydrogenase 2</fullName>
        <ecNumber evidence="2">1.5.5.2</ecNumber>
    </alternativeName>
    <alternativeName>
        <fullName>Probable proline oxidase 2</fullName>
    </alternativeName>
</protein>
<name>HYPDH_HUMAN</name>
<keyword id="KW-0007">Acetylation</keyword>
<keyword id="KW-0274">FAD</keyword>
<keyword id="KW-0285">Flavoprotein</keyword>
<keyword id="KW-0560">Oxidoreductase</keyword>
<keyword id="KW-0642">Proline metabolism</keyword>
<keyword id="KW-1267">Proteomics identification</keyword>
<keyword id="KW-1185">Reference proteome</keyword>
<sequence length="460" mass="50898">MLRTCYVLCSQAGPPSRGWQSLSFDGGAFHLKGTGELTRALLVLRLCAWPPLVTHGLLLQAWSRRLLGSRLSGAFLRASVYGQFVAGETAEEVKGCVQQLRTLSLRPLLAVPTEEEPDSAAKSGEAWYEGNLGAMLRCVDLSRGLLEPPSLAEASLMQLKVTALTSTRLCKELASWVRRPGASLELSPERLAEAMDSGQNLQVSCLNAEQNQHLRASLSRLHRVAQYARAQHVRLLVDAEYTSLNPALSLLVAALAVRWNSPGEGGPWVWNTYQACLKDTFERLGRDAEAAHRAGLAFGVKLVRGAYLDKERAVAQLHGMEDPTQPDYEATSQSYSRCLELMLTHVARHGPMCHLMVASHNEESVRQATKRMWELGIPLDGTVCFGQLLGMCDHVSLALGQAGYVVYKSIPYGSLEEVIPYLIRRAQENRSVLQGARREQELLSQELWRRLLPGCRRIPH</sequence>
<comment type="function">
    <text evidence="2">Dehydrogenase that converts trans-4-L-hydroxyproline to delta-1-pyrroline-3-hydroxy-5-carboxylate (Hyp) using ubiquinone-10 as the terminal electron acceptor. Can also use proline as a substrate but with a very much lower efficiency. Does not react with other diastereomers of Hyp: trans-4-D-hydroxyproline and cis-4-L-hydroxyproline. Ubiquininone analogs such as menadione, duroquinone and ubiquinone-1 react more efficiently than oxygen as the terminal electron acceptor during catalysis.</text>
</comment>
<comment type="catalytic activity">
    <reaction evidence="2">
        <text>trans-4-hydroxy-L-proline + a quinone = (3R,5S)-1-pyrroline-3-hydroxy-5-carboxylate + a quinol + H(+)</text>
        <dbReference type="Rhea" id="RHEA:52512"/>
        <dbReference type="ChEBI" id="CHEBI:15378"/>
        <dbReference type="ChEBI" id="CHEBI:24646"/>
        <dbReference type="ChEBI" id="CHEBI:58375"/>
        <dbReference type="ChEBI" id="CHEBI:62612"/>
        <dbReference type="ChEBI" id="CHEBI:132124"/>
        <dbReference type="EC" id="1.5.5.3"/>
    </reaction>
</comment>
<comment type="catalytic activity">
    <reaction evidence="2">
        <text>L-proline + a quinone = (S)-1-pyrroline-5-carboxylate + a quinol + H(+)</text>
        <dbReference type="Rhea" id="RHEA:23784"/>
        <dbReference type="ChEBI" id="CHEBI:15378"/>
        <dbReference type="ChEBI" id="CHEBI:17388"/>
        <dbReference type="ChEBI" id="CHEBI:24646"/>
        <dbReference type="ChEBI" id="CHEBI:60039"/>
        <dbReference type="ChEBI" id="CHEBI:132124"/>
        <dbReference type="EC" id="1.5.5.2"/>
    </reaction>
</comment>
<comment type="cofactor">
    <cofactor evidence="2">
        <name>FAD</name>
        <dbReference type="ChEBI" id="CHEBI:57692"/>
    </cofactor>
</comment>
<comment type="activity regulation">
    <text evidence="2">Hydroproxyproline dehydrogenase activity is inhibited by THFA,(1R,3R)3-OH-cyclopentane-COOH and 5-OH-1H-pyrazole-3-COOH.</text>
</comment>
<comment type="biophysicochemical properties">
    <kinetics>
        <KM evidence="2">200 mM for trans-4-L-hydroxyproline</KM>
        <KM evidence="2">28 mM for oxygen</KM>
        <KM evidence="2">143 uM for duroquinone</KM>
        <KM evidence="2">25 uM for menadione</KM>
        <KM evidence="2">124 uM for ubiquinone-1</KM>
        <text evidence="2">kcat with trans-4-L-hydroxyproline (Hyp) and ubiquinone-1 is 0.19 sec(-1). Proline is unable to saturate PRODH2 at least up to 750mM. kcat/KM with proline and ubiquinone-10: 0.075 M(-1)/sec. kcat with oxygen, duroquinone, menadione and CoQ1 and with trans-4-L-hydroxyproline are 0.002 sec(-1), 0.27 sec(-1), 0.28 sec(-1) and 0.19 sec(-1), respectively.</text>
    </kinetics>
</comment>
<comment type="similarity">
    <text evidence="4">Belongs to the proline oxidase family.</text>
</comment>
<comment type="sequence caution" evidence="4">
    <conflict type="erroneous initiation">
        <sequence resource="EMBL-CDS" id="AAF21465"/>
    </conflict>
    <text>Extended N-terminus.</text>
</comment>
<proteinExistence type="evidence at protein level"/>
<accession>Q9UF12</accession>
<accession>A0A590UKC3</accession>
<evidence type="ECO:0000250" key="1">
    <source>
        <dbReference type="UniProtKB" id="Q8VCZ9"/>
    </source>
</evidence>
<evidence type="ECO:0000269" key="2">
    <source>
    </source>
</evidence>
<evidence type="ECO:0000303" key="3">
    <source>
    </source>
</evidence>
<evidence type="ECO:0000305" key="4"/>
<evidence type="ECO:0000312" key="5">
    <source>
        <dbReference type="HGNC" id="HGNC:17325"/>
    </source>
</evidence>
<reference key="1">
    <citation type="submission" date="1996-11" db="EMBL/GenBank/DDBJ databases">
        <authorList>
            <person name="Lin W.-W."/>
            <person name="Hu C.A."/>
            <person name="Valle D."/>
        </authorList>
    </citation>
    <scope>NUCLEOTIDE SEQUENCE [MRNA]</scope>
</reference>
<reference key="2">
    <citation type="journal article" date="2004" name="Nature">
        <title>The DNA sequence and biology of human chromosome 19.</title>
        <authorList>
            <person name="Grimwood J."/>
            <person name="Gordon L.A."/>
            <person name="Olsen A.S."/>
            <person name="Terry A."/>
            <person name="Schmutz J."/>
            <person name="Lamerdin J.E."/>
            <person name="Hellsten U."/>
            <person name="Goodstein D."/>
            <person name="Couronne O."/>
            <person name="Tran-Gyamfi M."/>
            <person name="Aerts A."/>
            <person name="Altherr M."/>
            <person name="Ashworth L."/>
            <person name="Bajorek E."/>
            <person name="Black S."/>
            <person name="Branscomb E."/>
            <person name="Caenepeel S."/>
            <person name="Carrano A.V."/>
            <person name="Caoile C."/>
            <person name="Chan Y.M."/>
            <person name="Christensen M."/>
            <person name="Cleland C.A."/>
            <person name="Copeland A."/>
            <person name="Dalin E."/>
            <person name="Dehal P."/>
            <person name="Denys M."/>
            <person name="Detter J.C."/>
            <person name="Escobar J."/>
            <person name="Flowers D."/>
            <person name="Fotopulos D."/>
            <person name="Garcia C."/>
            <person name="Georgescu A.M."/>
            <person name="Glavina T."/>
            <person name="Gomez M."/>
            <person name="Gonzales E."/>
            <person name="Groza M."/>
            <person name="Hammon N."/>
            <person name="Hawkins T."/>
            <person name="Haydu L."/>
            <person name="Ho I."/>
            <person name="Huang W."/>
            <person name="Israni S."/>
            <person name="Jett J."/>
            <person name="Kadner K."/>
            <person name="Kimball H."/>
            <person name="Kobayashi A."/>
            <person name="Larionov V."/>
            <person name="Leem S.-H."/>
            <person name="Lopez F."/>
            <person name="Lou Y."/>
            <person name="Lowry S."/>
            <person name="Malfatti S."/>
            <person name="Martinez D."/>
            <person name="McCready P.M."/>
            <person name="Medina C."/>
            <person name="Morgan J."/>
            <person name="Nelson K."/>
            <person name="Nolan M."/>
            <person name="Ovcharenko I."/>
            <person name="Pitluck S."/>
            <person name="Pollard M."/>
            <person name="Popkie A.P."/>
            <person name="Predki P."/>
            <person name="Quan G."/>
            <person name="Ramirez L."/>
            <person name="Rash S."/>
            <person name="Retterer J."/>
            <person name="Rodriguez A."/>
            <person name="Rogers S."/>
            <person name="Salamov A."/>
            <person name="Salazar A."/>
            <person name="She X."/>
            <person name="Smith D."/>
            <person name="Slezak T."/>
            <person name="Solovyev V."/>
            <person name="Thayer N."/>
            <person name="Tice H."/>
            <person name="Tsai M."/>
            <person name="Ustaszewska A."/>
            <person name="Vo N."/>
            <person name="Wagner M."/>
            <person name="Wheeler J."/>
            <person name="Wu K."/>
            <person name="Xie G."/>
            <person name="Yang J."/>
            <person name="Dubchak I."/>
            <person name="Furey T.S."/>
            <person name="DeJong P."/>
            <person name="Dickson M."/>
            <person name="Gordon D."/>
            <person name="Eichler E.E."/>
            <person name="Pennacchio L.A."/>
            <person name="Richardson P."/>
            <person name="Stubbs L."/>
            <person name="Rokhsar D.S."/>
            <person name="Myers R.M."/>
            <person name="Rubin E.M."/>
            <person name="Lucas S.M."/>
        </authorList>
    </citation>
    <scope>NUCLEOTIDE SEQUENCE [LARGE SCALE GENOMIC DNA]</scope>
</reference>
<reference key="3">
    <citation type="journal article" date="2015" name="Biochem. J.">
        <title>Proline dehydrogenase 2 (PRODH2) is a hydroxyproline dehydrogenase (HYPDH) and molecular target for treating primary hyperoxaluria.</title>
        <authorList>
            <person name="Summitt C.B."/>
            <person name="Johnson L.C."/>
            <person name="Joensson T.J."/>
            <person name="Parsonage D."/>
            <person name="Holmes R.P."/>
            <person name="Lowther W.T."/>
        </authorList>
    </citation>
    <scope>FUNCTION</scope>
    <scope>BIOPHYSICOCHEMICAL PROPERTIES</scope>
    <scope>CATALYTIC ACTIVITY</scope>
    <scope>COFACTOR</scope>
    <scope>SUBSTRATE SPECIFICITY</scope>
    <scope>ACTIVITY REGULATION</scope>
</reference>
<organism>
    <name type="scientific">Homo sapiens</name>
    <name type="common">Human</name>
    <dbReference type="NCBI Taxonomy" id="9606"/>
    <lineage>
        <taxon>Eukaryota</taxon>
        <taxon>Metazoa</taxon>
        <taxon>Chordata</taxon>
        <taxon>Craniata</taxon>
        <taxon>Vertebrata</taxon>
        <taxon>Euteleostomi</taxon>
        <taxon>Mammalia</taxon>
        <taxon>Eutheria</taxon>
        <taxon>Euarchontoglires</taxon>
        <taxon>Primates</taxon>
        <taxon>Haplorrhini</taxon>
        <taxon>Catarrhini</taxon>
        <taxon>Hominidae</taxon>
        <taxon>Homo</taxon>
    </lineage>
</organism>
<dbReference type="EC" id="1.5.5.3" evidence="2"/>
<dbReference type="EC" id="1.5.5.2" evidence="2"/>
<dbReference type="EMBL" id="U80018">
    <property type="protein sequence ID" value="AAF21465.1"/>
    <property type="status" value="ALT_INIT"/>
    <property type="molecule type" value="mRNA"/>
</dbReference>
<dbReference type="EMBL" id="AC002398">
    <property type="status" value="NOT_ANNOTATED_CDS"/>
    <property type="molecule type" value="Genomic_DNA"/>
</dbReference>
<dbReference type="EMBL" id="U95090">
    <property type="status" value="NOT_ANNOTATED_CDS"/>
    <property type="molecule type" value="Genomic_DNA"/>
</dbReference>
<dbReference type="CCDS" id="CCDS12478.2"/>
<dbReference type="RefSeq" id="NP_067055.2">
    <property type="nucleotide sequence ID" value="NM_021232.2"/>
</dbReference>
<dbReference type="RefSeq" id="XP_016882573.1">
    <property type="nucleotide sequence ID" value="XM_017027084.1"/>
</dbReference>
<dbReference type="SMR" id="Q9UF12"/>
<dbReference type="BioGRID" id="121837">
    <property type="interactions" value="1"/>
</dbReference>
<dbReference type="FunCoup" id="Q9UF12">
    <property type="interactions" value="284"/>
</dbReference>
<dbReference type="IntAct" id="Q9UF12">
    <property type="interactions" value="1"/>
</dbReference>
<dbReference type="STRING" id="9606.ENSP00000301175"/>
<dbReference type="BindingDB" id="Q9UF12"/>
<dbReference type="ChEMBL" id="CHEMBL4523486"/>
<dbReference type="iPTMnet" id="Q9UF12"/>
<dbReference type="BioMuta" id="PRODH2"/>
<dbReference type="DMDM" id="74720632"/>
<dbReference type="jPOST" id="Q9UF12"/>
<dbReference type="MassIVE" id="Q9UF12"/>
<dbReference type="PaxDb" id="9606-ENSP00000301175"/>
<dbReference type="PeptideAtlas" id="Q9UF12"/>
<dbReference type="ProteomicsDB" id="84167"/>
<dbReference type="Antibodypedia" id="44579">
    <property type="antibodies" value="77 antibodies from 16 providers"/>
</dbReference>
<dbReference type="DNASU" id="58510"/>
<dbReference type="Ensembl" id="ENST00000301175.7">
    <property type="protein sequence ID" value="ENSP00000301175.4"/>
    <property type="gene ID" value="ENSG00000250799.11"/>
</dbReference>
<dbReference type="Ensembl" id="ENST00000653904.2">
    <property type="protein sequence ID" value="ENSP00000499779.1"/>
    <property type="gene ID" value="ENSG00000250799.11"/>
</dbReference>
<dbReference type="GeneID" id="58510"/>
<dbReference type="KEGG" id="hsa:58510"/>
<dbReference type="MANE-Select" id="ENST00000653904.2">
    <property type="protein sequence ID" value="ENSP00000499779.1"/>
    <property type="RefSeq nucleotide sequence ID" value="NM_021232.2"/>
    <property type="RefSeq protein sequence ID" value="NP_067055.2"/>
</dbReference>
<dbReference type="UCSC" id="uc002obx.1">
    <property type="organism name" value="human"/>
</dbReference>
<dbReference type="AGR" id="HGNC:17325"/>
<dbReference type="CTD" id="58510"/>
<dbReference type="DisGeNET" id="58510"/>
<dbReference type="GeneCards" id="PRODH2"/>
<dbReference type="HGNC" id="HGNC:17325">
    <property type="gene designation" value="PRODH2"/>
</dbReference>
<dbReference type="HPA" id="ENSG00000250799">
    <property type="expression patterns" value="Group enriched (kidney, liver)"/>
</dbReference>
<dbReference type="MalaCards" id="PRODH2"/>
<dbReference type="MIM" id="616377">
    <property type="type" value="gene"/>
</dbReference>
<dbReference type="neXtProt" id="NX_Q9UF12"/>
<dbReference type="OpenTargets" id="ENSG00000250799"/>
<dbReference type="PharmGKB" id="PA33802"/>
<dbReference type="VEuPathDB" id="HostDB:ENSG00000250799"/>
<dbReference type="eggNOG" id="KOG0186">
    <property type="taxonomic scope" value="Eukaryota"/>
</dbReference>
<dbReference type="GeneTree" id="ENSGT00390000006265"/>
<dbReference type="HOGENOM" id="CLU_018202_3_2_1"/>
<dbReference type="InParanoid" id="Q9UF12"/>
<dbReference type="OrthoDB" id="5464at2759"/>
<dbReference type="PAN-GO" id="Q9UF12">
    <property type="GO annotations" value="4 GO annotations based on evolutionary models"/>
</dbReference>
<dbReference type="PhylomeDB" id="Q9UF12"/>
<dbReference type="TreeFam" id="TF313544"/>
<dbReference type="BioCyc" id="MetaCyc:MONOMER66-34410"/>
<dbReference type="BRENDA" id="1.5.5.3">
    <property type="organism ID" value="2681"/>
</dbReference>
<dbReference type="PathwayCommons" id="Q9UF12"/>
<dbReference type="Reactome" id="R-HSA-389661">
    <property type="pathway name" value="Glyoxylate metabolism and glycine degradation"/>
</dbReference>
<dbReference type="Reactome" id="R-HSA-70688">
    <property type="pathway name" value="Proline catabolism"/>
</dbReference>
<dbReference type="SignaLink" id="Q9UF12"/>
<dbReference type="BioGRID-ORCS" id="58510">
    <property type="hits" value="66 hits in 1154 CRISPR screens"/>
</dbReference>
<dbReference type="GenomeRNAi" id="58510"/>
<dbReference type="Pharos" id="Q9UF12">
    <property type="development level" value="Tbio"/>
</dbReference>
<dbReference type="PRO" id="PR:Q9UF12"/>
<dbReference type="Proteomes" id="UP000005640">
    <property type="component" value="Chromosome 19"/>
</dbReference>
<dbReference type="RNAct" id="Q9UF12">
    <property type="molecule type" value="protein"/>
</dbReference>
<dbReference type="Bgee" id="ENSG00000250799">
    <property type="expression patterns" value="Expressed in right lobe of liver and 88 other cell types or tissues"/>
</dbReference>
<dbReference type="ExpressionAtlas" id="Q9UF12">
    <property type="expression patterns" value="baseline and differential"/>
</dbReference>
<dbReference type="GO" id="GO:0005743">
    <property type="term" value="C:mitochondrial inner membrane"/>
    <property type="evidence" value="ECO:0000304"/>
    <property type="project" value="Reactome"/>
</dbReference>
<dbReference type="GO" id="GO:0005739">
    <property type="term" value="C:mitochondrion"/>
    <property type="evidence" value="ECO:0000318"/>
    <property type="project" value="GO_Central"/>
</dbReference>
<dbReference type="GO" id="GO:0071949">
    <property type="term" value="F:FAD binding"/>
    <property type="evidence" value="ECO:0000318"/>
    <property type="project" value="GO_Central"/>
</dbReference>
<dbReference type="GO" id="GO:0016645">
    <property type="term" value="F:oxidoreductase activity, acting on the CH-NH group of donors"/>
    <property type="evidence" value="ECO:0000314"/>
    <property type="project" value="UniProtKB"/>
</dbReference>
<dbReference type="GO" id="GO:0004657">
    <property type="term" value="F:proline dehydrogenase activity"/>
    <property type="evidence" value="ECO:0000318"/>
    <property type="project" value="GO_Central"/>
</dbReference>
<dbReference type="GO" id="GO:0006562">
    <property type="term" value="P:proline catabolic process"/>
    <property type="evidence" value="ECO:0000304"/>
    <property type="project" value="Reactome"/>
</dbReference>
<dbReference type="GO" id="GO:0010133">
    <property type="term" value="P:proline catabolic process to glutamate"/>
    <property type="evidence" value="ECO:0000318"/>
    <property type="project" value="GO_Central"/>
</dbReference>
<dbReference type="Gene3D" id="3.20.20.220">
    <property type="match status" value="1"/>
</dbReference>
<dbReference type="InterPro" id="IPR029041">
    <property type="entry name" value="FAD-linked_oxidoreductase-like"/>
</dbReference>
<dbReference type="InterPro" id="IPR002872">
    <property type="entry name" value="Proline_DH_dom"/>
</dbReference>
<dbReference type="InterPro" id="IPR015659">
    <property type="entry name" value="Proline_oxidase"/>
</dbReference>
<dbReference type="PANTHER" id="PTHR13914:SF29">
    <property type="entry name" value="HYDROXYPROLINE DEHYDROGENASE"/>
    <property type="match status" value="1"/>
</dbReference>
<dbReference type="PANTHER" id="PTHR13914">
    <property type="entry name" value="PROLINE OXIDASE"/>
    <property type="match status" value="1"/>
</dbReference>
<dbReference type="Pfam" id="PF01619">
    <property type="entry name" value="Pro_dh"/>
    <property type="match status" value="1"/>
</dbReference>
<dbReference type="SUPFAM" id="SSF51730">
    <property type="entry name" value="FAD-linked oxidoreductase"/>
    <property type="match status" value="1"/>
</dbReference>